<feature type="chain" id="PRO_1000004976" description="Peptide chain release factor 2">
    <location>
        <begin position="1"/>
        <end position="367"/>
    </location>
</feature>
<feature type="modified residue" description="N5-methylglutamine" evidence="2">
    <location>
        <position position="254"/>
    </location>
</feature>
<evidence type="ECO:0000250" key="1"/>
<evidence type="ECO:0000255" key="2">
    <source>
        <dbReference type="HAMAP-Rule" id="MF_00094"/>
    </source>
</evidence>
<comment type="function">
    <text evidence="2">Peptide chain release factor 2 directs the termination of translation in response to the peptide chain termination codons UGA and UAA.</text>
</comment>
<comment type="subcellular location">
    <subcellularLocation>
        <location evidence="2">Cytoplasm</location>
    </subcellularLocation>
</comment>
<comment type="PTM">
    <text evidence="2">Methylated by PrmC. Methylation increases the termination efficiency of RF2.</text>
</comment>
<comment type="miscellaneous">
    <text evidence="1">The gene for this protein contains a UGA in-frame termination codon after Leu-27; a naturally occurring frameshift enables complete translation of RF-2. This provides a mechanism for the protein to regulate its own production (By similarity).</text>
</comment>
<comment type="similarity">
    <text evidence="2">Belongs to the prokaryotic/mitochondrial release factor family.</text>
</comment>
<reference key="1">
    <citation type="journal article" date="2004" name="Proc. Natl. Acad. Sci. U.S.A.">
        <title>Structural flexibility in the Burkholderia mallei genome.</title>
        <authorList>
            <person name="Nierman W.C."/>
            <person name="DeShazer D."/>
            <person name="Kim H.S."/>
            <person name="Tettelin H."/>
            <person name="Nelson K.E."/>
            <person name="Feldblyum T.V."/>
            <person name="Ulrich R.L."/>
            <person name="Ronning C.M."/>
            <person name="Brinkac L.M."/>
            <person name="Daugherty S.C."/>
            <person name="Davidsen T.D."/>
            <person name="DeBoy R.T."/>
            <person name="Dimitrov G."/>
            <person name="Dodson R.J."/>
            <person name="Durkin A.S."/>
            <person name="Gwinn M.L."/>
            <person name="Haft D.H."/>
            <person name="Khouri H.M."/>
            <person name="Kolonay J.F."/>
            <person name="Madupu R."/>
            <person name="Mohammoud Y."/>
            <person name="Nelson W.C."/>
            <person name="Radune D."/>
            <person name="Romero C.M."/>
            <person name="Sarria S."/>
            <person name="Selengut J."/>
            <person name="Shamblin C."/>
            <person name="Sullivan S.A."/>
            <person name="White O."/>
            <person name="Yu Y."/>
            <person name="Zafar N."/>
            <person name="Zhou L."/>
            <person name="Fraser C.M."/>
        </authorList>
    </citation>
    <scope>NUCLEOTIDE SEQUENCE [LARGE SCALE GENOMIC DNA]</scope>
    <source>
        <strain>ATCC 23344</strain>
    </source>
</reference>
<accession>Q62J00</accession>
<protein>
    <recommendedName>
        <fullName evidence="2">Peptide chain release factor 2</fullName>
        <shortName evidence="2">RF-2</shortName>
    </recommendedName>
</protein>
<sequence>MEAERLNAIESSLADLRRRAGELRGYLDYDVKSERLAEVNKQLEDPNVWNDSKNAQALGREKKSLESVVTTLTALDNDLRDAQDLFELAHEEGDEETLVATESDAAKLEARVADIEFRRMFSNPADPNNCFIDIQAGAGGTEACDWASMLLRQYLRYCERKGFKAEVLEESDGDVAGIKNATIKVSGEYAYGYLRTETGIHRLVRKSPFDSSGGRHTSFSSVFVYPEIDDSIEVEINPADLRIDTYRASGAGGQHINKTDSAVRITHMPTGIVVQCQNDRSQHRNRAEAMAMLKSRLFEAELRKRQAEQDKLESSKTDVGWGHQIRSYVLDQSRVKDLRTNVEMSNTKAVLDGDLDDFISASLKQGV</sequence>
<organism>
    <name type="scientific">Burkholderia mallei (strain ATCC 23344)</name>
    <dbReference type="NCBI Taxonomy" id="243160"/>
    <lineage>
        <taxon>Bacteria</taxon>
        <taxon>Pseudomonadati</taxon>
        <taxon>Pseudomonadota</taxon>
        <taxon>Betaproteobacteria</taxon>
        <taxon>Burkholderiales</taxon>
        <taxon>Burkholderiaceae</taxon>
        <taxon>Burkholderia</taxon>
        <taxon>pseudomallei group</taxon>
    </lineage>
</organism>
<keyword id="KW-0963">Cytoplasm</keyword>
<keyword id="KW-0488">Methylation</keyword>
<keyword id="KW-0648">Protein biosynthesis</keyword>
<keyword id="KW-1185">Reference proteome</keyword>
<keyword id="KW-0688">Ribosomal frameshifting</keyword>
<gene>
    <name evidence="2" type="primary">prfB</name>
    <name type="ordered locus">BMA1699</name>
</gene>
<name>RF2_BURMA</name>
<proteinExistence type="inferred from homology"/>
<dbReference type="EMBL" id="CP000010">
    <property type="protein sequence ID" value="AAU47810.1"/>
    <property type="molecule type" value="Genomic_DNA"/>
</dbReference>
<dbReference type="RefSeq" id="WP_004199566.1">
    <property type="nucleotide sequence ID" value="NC_006348.1"/>
</dbReference>
<dbReference type="RefSeq" id="YP_103319.1">
    <property type="nucleotide sequence ID" value="NC_006348.1"/>
</dbReference>
<dbReference type="SMR" id="Q62J00"/>
<dbReference type="GeneID" id="93060837"/>
<dbReference type="KEGG" id="bma:BMA1699"/>
<dbReference type="PATRIC" id="fig|243160.12.peg.1740"/>
<dbReference type="eggNOG" id="COG1186">
    <property type="taxonomic scope" value="Bacteria"/>
</dbReference>
<dbReference type="HOGENOM" id="CLU_220733_0_0_4"/>
<dbReference type="Proteomes" id="UP000006693">
    <property type="component" value="Chromosome 1"/>
</dbReference>
<dbReference type="GO" id="GO:0005737">
    <property type="term" value="C:cytoplasm"/>
    <property type="evidence" value="ECO:0007669"/>
    <property type="project" value="UniProtKB-SubCell"/>
</dbReference>
<dbReference type="GO" id="GO:0016149">
    <property type="term" value="F:translation release factor activity, codon specific"/>
    <property type="evidence" value="ECO:0007669"/>
    <property type="project" value="UniProtKB-UniRule"/>
</dbReference>
<dbReference type="GO" id="GO:0075523">
    <property type="term" value="P:viral translational frameshifting"/>
    <property type="evidence" value="ECO:0007669"/>
    <property type="project" value="UniProtKB-KW"/>
</dbReference>
<dbReference type="FunFam" id="3.30.160.20:FF:000010">
    <property type="entry name" value="Peptide chain release factor 2"/>
    <property type="match status" value="1"/>
</dbReference>
<dbReference type="Gene3D" id="3.30.160.20">
    <property type="match status" value="1"/>
</dbReference>
<dbReference type="Gene3D" id="3.30.70.1660">
    <property type="match status" value="1"/>
</dbReference>
<dbReference type="Gene3D" id="1.20.58.410">
    <property type="entry name" value="Release factor"/>
    <property type="match status" value="1"/>
</dbReference>
<dbReference type="HAMAP" id="MF_00094">
    <property type="entry name" value="Rel_fac_2"/>
    <property type="match status" value="1"/>
</dbReference>
<dbReference type="InterPro" id="IPR005139">
    <property type="entry name" value="PCRF"/>
</dbReference>
<dbReference type="InterPro" id="IPR000352">
    <property type="entry name" value="Pep_chain_release_fac_I"/>
</dbReference>
<dbReference type="InterPro" id="IPR045853">
    <property type="entry name" value="Pep_chain_release_fac_I_sf"/>
</dbReference>
<dbReference type="InterPro" id="IPR004374">
    <property type="entry name" value="PrfB"/>
</dbReference>
<dbReference type="NCBIfam" id="TIGR00020">
    <property type="entry name" value="prfB"/>
    <property type="match status" value="1"/>
</dbReference>
<dbReference type="PANTHER" id="PTHR43116:SF3">
    <property type="entry name" value="CLASS I PEPTIDE CHAIN RELEASE FACTOR"/>
    <property type="match status" value="1"/>
</dbReference>
<dbReference type="PANTHER" id="PTHR43116">
    <property type="entry name" value="PEPTIDE CHAIN RELEASE FACTOR 2"/>
    <property type="match status" value="1"/>
</dbReference>
<dbReference type="Pfam" id="PF03462">
    <property type="entry name" value="PCRF"/>
    <property type="match status" value="1"/>
</dbReference>
<dbReference type="Pfam" id="PF00472">
    <property type="entry name" value="RF-1"/>
    <property type="match status" value="1"/>
</dbReference>
<dbReference type="SMART" id="SM00937">
    <property type="entry name" value="PCRF"/>
    <property type="match status" value="1"/>
</dbReference>
<dbReference type="SUPFAM" id="SSF75620">
    <property type="entry name" value="Release factor"/>
    <property type="match status" value="1"/>
</dbReference>
<dbReference type="PROSITE" id="PS00745">
    <property type="entry name" value="RF_PROK_I"/>
    <property type="match status" value="1"/>
</dbReference>